<comment type="function">
    <text evidence="1">Allows the formation of correctly charged Gln-tRNA(Gln) through the transamidation of misacylated Glu-tRNA(Gln) in organisms which lack glutaminyl-tRNA synthetase. The reaction takes place in the presence of glutamine and ATP through an activated gamma-phospho-Glu-tRNA(Gln).</text>
</comment>
<comment type="catalytic activity">
    <reaction evidence="1">
        <text>L-glutamyl-tRNA(Gln) + L-glutamine + ATP + H2O = L-glutaminyl-tRNA(Gln) + L-glutamate + ADP + phosphate + H(+)</text>
        <dbReference type="Rhea" id="RHEA:17521"/>
        <dbReference type="Rhea" id="RHEA-COMP:9681"/>
        <dbReference type="Rhea" id="RHEA-COMP:9684"/>
        <dbReference type="ChEBI" id="CHEBI:15377"/>
        <dbReference type="ChEBI" id="CHEBI:15378"/>
        <dbReference type="ChEBI" id="CHEBI:29985"/>
        <dbReference type="ChEBI" id="CHEBI:30616"/>
        <dbReference type="ChEBI" id="CHEBI:43474"/>
        <dbReference type="ChEBI" id="CHEBI:58359"/>
        <dbReference type="ChEBI" id="CHEBI:78520"/>
        <dbReference type="ChEBI" id="CHEBI:78521"/>
        <dbReference type="ChEBI" id="CHEBI:456216"/>
        <dbReference type="EC" id="6.3.5.7"/>
    </reaction>
</comment>
<comment type="subunit">
    <text evidence="1">Heterotrimer of A, B and C subunits.</text>
</comment>
<comment type="similarity">
    <text evidence="1">Belongs to the amidase family. GatA subfamily.</text>
</comment>
<protein>
    <recommendedName>
        <fullName evidence="1">Glutamyl-tRNA(Gln) amidotransferase subunit A</fullName>
        <shortName evidence="1">Glu-ADT subunit A</shortName>
        <ecNumber evidence="1">6.3.5.7</ecNumber>
    </recommendedName>
</protein>
<feature type="chain" id="PRO_0000241143" description="Glutamyl-tRNA(Gln) amidotransferase subunit A">
    <location>
        <begin position="1"/>
        <end position="492"/>
    </location>
</feature>
<feature type="active site" description="Charge relay system" evidence="1">
    <location>
        <position position="78"/>
    </location>
</feature>
<feature type="active site" description="Charge relay system" evidence="1">
    <location>
        <position position="158"/>
    </location>
</feature>
<feature type="active site" description="Acyl-ester intermediate" evidence="1">
    <location>
        <position position="182"/>
    </location>
</feature>
<evidence type="ECO:0000255" key="1">
    <source>
        <dbReference type="HAMAP-Rule" id="MF_00120"/>
    </source>
</evidence>
<name>GATA_RHOP2</name>
<sequence length="492" mass="51990">MTDLTSLTLAEARDGLVNKSFTAVELTDAHLAAIEAARVLNAYVLETPDQARQMAQAADAQIAKGEGGPLAGIPLGIKDLFATKGTRTTACSKILGDFKPPYESTVTSQLWRDGAVLLGKLNNDEFAMGSSNETSCFGPVVNPWRRAGSETKLVPGGSSGGSAAAVAAGLCLGATATDTGGSIRQPAAFTGTVGIKPTYGRCSRWGIVAFASSLDQAGPIARTVRDSAILLGSMAGFDPKDTTSVDRPVPNYEAAIGGSVKGMKIGIPKEYRLDGMPAEIEKLWMQGAEWLKAAGAELVEVSLPHTKYALPAYYIVAPAEASSNLARYDGVRYGTRVNGRNIVEMYENTRAAGFGAEVKRRIMIGTYVLSAGYYDAYYLRAQKVRTLIKRDFEQCFDQGVSAILTPATPSAAFGIGEKGGADPVEMYLNDIFTVTVNMAGLPGIAVPAGSDSQGLPLGLQLIGRPFDEETLFSLGDVIEQSAGRFTPAKWWA</sequence>
<reference key="1">
    <citation type="submission" date="2006-01" db="EMBL/GenBank/DDBJ databases">
        <title>Complete sequence of Rhodopseudomonas palustris HaA2.</title>
        <authorList>
            <consortium name="US DOE Joint Genome Institute"/>
            <person name="Copeland A."/>
            <person name="Lucas S."/>
            <person name="Lapidus A."/>
            <person name="Barry K."/>
            <person name="Detter J.C."/>
            <person name="Glavina T."/>
            <person name="Hammon N."/>
            <person name="Israni S."/>
            <person name="Pitluck S."/>
            <person name="Chain P."/>
            <person name="Malfatti S."/>
            <person name="Shin M."/>
            <person name="Vergez L."/>
            <person name="Schmutz J."/>
            <person name="Larimer F."/>
            <person name="Land M."/>
            <person name="Hauser L."/>
            <person name="Pelletier D.A."/>
            <person name="Kyrpides N."/>
            <person name="Anderson I."/>
            <person name="Oda Y."/>
            <person name="Harwood C.S."/>
            <person name="Richardson P."/>
        </authorList>
    </citation>
    <scope>NUCLEOTIDE SEQUENCE [LARGE SCALE GENOMIC DNA]</scope>
    <source>
        <strain>HaA2</strain>
    </source>
</reference>
<proteinExistence type="inferred from homology"/>
<gene>
    <name evidence="1" type="primary">gatA</name>
    <name type="ordered locus">RPB_2438</name>
</gene>
<keyword id="KW-0067">ATP-binding</keyword>
<keyword id="KW-0436">Ligase</keyword>
<keyword id="KW-0547">Nucleotide-binding</keyword>
<keyword id="KW-0648">Protein biosynthesis</keyword>
<keyword id="KW-1185">Reference proteome</keyword>
<accession>Q2IXB7</accession>
<dbReference type="EC" id="6.3.5.7" evidence="1"/>
<dbReference type="EMBL" id="CP000250">
    <property type="protein sequence ID" value="ABD07143.1"/>
    <property type="molecule type" value="Genomic_DNA"/>
</dbReference>
<dbReference type="RefSeq" id="WP_011441328.1">
    <property type="nucleotide sequence ID" value="NC_007778.1"/>
</dbReference>
<dbReference type="SMR" id="Q2IXB7"/>
<dbReference type="STRING" id="316058.RPB_2438"/>
<dbReference type="KEGG" id="rpb:RPB_2438"/>
<dbReference type="eggNOG" id="COG0154">
    <property type="taxonomic scope" value="Bacteria"/>
</dbReference>
<dbReference type="HOGENOM" id="CLU_009600_0_3_5"/>
<dbReference type="OrthoDB" id="9811471at2"/>
<dbReference type="Proteomes" id="UP000008809">
    <property type="component" value="Chromosome"/>
</dbReference>
<dbReference type="GO" id="GO:0030956">
    <property type="term" value="C:glutamyl-tRNA(Gln) amidotransferase complex"/>
    <property type="evidence" value="ECO:0007669"/>
    <property type="project" value="InterPro"/>
</dbReference>
<dbReference type="GO" id="GO:0005524">
    <property type="term" value="F:ATP binding"/>
    <property type="evidence" value="ECO:0007669"/>
    <property type="project" value="UniProtKB-KW"/>
</dbReference>
<dbReference type="GO" id="GO:0050567">
    <property type="term" value="F:glutaminyl-tRNA synthase (glutamine-hydrolyzing) activity"/>
    <property type="evidence" value="ECO:0007669"/>
    <property type="project" value="UniProtKB-UniRule"/>
</dbReference>
<dbReference type="GO" id="GO:0006412">
    <property type="term" value="P:translation"/>
    <property type="evidence" value="ECO:0007669"/>
    <property type="project" value="UniProtKB-UniRule"/>
</dbReference>
<dbReference type="Gene3D" id="3.90.1300.10">
    <property type="entry name" value="Amidase signature (AS) domain"/>
    <property type="match status" value="1"/>
</dbReference>
<dbReference type="HAMAP" id="MF_00120">
    <property type="entry name" value="GatA"/>
    <property type="match status" value="1"/>
</dbReference>
<dbReference type="InterPro" id="IPR000120">
    <property type="entry name" value="Amidase"/>
</dbReference>
<dbReference type="InterPro" id="IPR020556">
    <property type="entry name" value="Amidase_CS"/>
</dbReference>
<dbReference type="InterPro" id="IPR023631">
    <property type="entry name" value="Amidase_dom"/>
</dbReference>
<dbReference type="InterPro" id="IPR036928">
    <property type="entry name" value="AS_sf"/>
</dbReference>
<dbReference type="InterPro" id="IPR004412">
    <property type="entry name" value="GatA"/>
</dbReference>
<dbReference type="NCBIfam" id="TIGR00132">
    <property type="entry name" value="gatA"/>
    <property type="match status" value="1"/>
</dbReference>
<dbReference type="PANTHER" id="PTHR11895:SF151">
    <property type="entry name" value="GLUTAMYL-TRNA(GLN) AMIDOTRANSFERASE SUBUNIT A"/>
    <property type="match status" value="1"/>
</dbReference>
<dbReference type="PANTHER" id="PTHR11895">
    <property type="entry name" value="TRANSAMIDASE"/>
    <property type="match status" value="1"/>
</dbReference>
<dbReference type="Pfam" id="PF01425">
    <property type="entry name" value="Amidase"/>
    <property type="match status" value="1"/>
</dbReference>
<dbReference type="SUPFAM" id="SSF75304">
    <property type="entry name" value="Amidase signature (AS) enzymes"/>
    <property type="match status" value="1"/>
</dbReference>
<dbReference type="PROSITE" id="PS00571">
    <property type="entry name" value="AMIDASES"/>
    <property type="match status" value="1"/>
</dbReference>
<organism>
    <name type="scientific">Rhodopseudomonas palustris (strain HaA2)</name>
    <dbReference type="NCBI Taxonomy" id="316058"/>
    <lineage>
        <taxon>Bacteria</taxon>
        <taxon>Pseudomonadati</taxon>
        <taxon>Pseudomonadota</taxon>
        <taxon>Alphaproteobacteria</taxon>
        <taxon>Hyphomicrobiales</taxon>
        <taxon>Nitrobacteraceae</taxon>
        <taxon>Rhodopseudomonas</taxon>
    </lineage>
</organism>